<evidence type="ECO:0000250" key="1"/>
<evidence type="ECO:0000250" key="2">
    <source>
        <dbReference type="UniProtKB" id="Q5BLK4"/>
    </source>
</evidence>
<evidence type="ECO:0000255" key="3">
    <source>
        <dbReference type="PROSITE-ProRule" id="PRU00047"/>
    </source>
</evidence>
<evidence type="ECO:0000255" key="4">
    <source>
        <dbReference type="PROSITE-ProRule" id="PRU00130"/>
    </source>
</evidence>
<evidence type="ECO:0000256" key="5">
    <source>
        <dbReference type="SAM" id="MobiDB-lite"/>
    </source>
</evidence>
<evidence type="ECO:0000269" key="6">
    <source>
    </source>
</evidence>
<evidence type="ECO:0000269" key="7">
    <source>
    </source>
</evidence>
<evidence type="ECO:0000269" key="8">
    <source>
    </source>
</evidence>
<evidence type="ECO:0000269" key="9">
    <source>
    </source>
</evidence>
<evidence type="ECO:0000269" key="10">
    <source>
    </source>
</evidence>
<evidence type="ECO:0000269" key="11">
    <source>
    </source>
</evidence>
<evidence type="ECO:0000269" key="12">
    <source>
    </source>
</evidence>
<evidence type="ECO:0000269" key="13">
    <source>
    </source>
</evidence>
<evidence type="ECO:0000303" key="14">
    <source>
    </source>
</evidence>
<evidence type="ECO:0000303" key="15">
    <source>
    </source>
</evidence>
<evidence type="ECO:0000303" key="16">
    <source>
    </source>
</evidence>
<evidence type="ECO:0000305" key="17"/>
<evidence type="ECO:0000312" key="18">
    <source>
        <dbReference type="HGNC" id="HGNC:25817"/>
    </source>
</evidence>
<evidence type="ECO:0007744" key="19">
    <source>
        <dbReference type="PDB" id="5W0B"/>
    </source>
</evidence>
<evidence type="ECO:0007744" key="20">
    <source>
        <dbReference type="PDB" id="5W0M"/>
    </source>
</evidence>
<evidence type="ECO:0007744" key="21">
    <source>
        <dbReference type="PDB" id="5W0N"/>
    </source>
</evidence>
<evidence type="ECO:0007744" key="22">
    <source>
        <dbReference type="PDB" id="5W0O"/>
    </source>
</evidence>
<evidence type="ECO:0007744" key="23">
    <source>
    </source>
</evidence>
<evidence type="ECO:0007744" key="24">
    <source>
    </source>
</evidence>
<evidence type="ECO:0007744" key="25">
    <source>
    </source>
</evidence>
<evidence type="ECO:0007744" key="26">
    <source>
    </source>
</evidence>
<evidence type="ECO:0007829" key="27">
    <source>
        <dbReference type="PDB" id="5W0B"/>
    </source>
</evidence>
<evidence type="ECO:0007829" key="28">
    <source>
        <dbReference type="PDB" id="5W0M"/>
    </source>
</evidence>
<evidence type="ECO:0007829" key="29">
    <source>
        <dbReference type="PDB" id="5W0N"/>
    </source>
</evidence>
<evidence type="ECO:0007829" key="30">
    <source>
        <dbReference type="PDB" id="5W0O"/>
    </source>
</evidence>
<comment type="function">
    <text evidence="2 7 8 9 10 11 12 13">Uridylyltransferase that mediates the terminal uridylation of mRNAs with short (less than 25 nucleotides) poly(A) tails, hence facilitating global mRNA decay (PubMed:19703396, PubMed:25480299). Essential for both oocyte maturation and fertility. Through 3' terminal uridylation of mRNA, sculpts, with TUT7, the maternal transcriptome by eliminating transcripts during oocyte growth (By similarity). Involved in microRNA (miRNA)-induced gene silencing through uridylation of deadenylated miRNA targets (PubMed:25480299). Also functions as an integral regulator of microRNA biogenesiS using 3 different uridylation mechanisms (PubMed:25979828). Acts as a suppressor of miRNA biogenesis by mediating the terminal uridylation of some miRNA precursors, including that of let-7 (pre-let-7). Uridylated pre-let-7 RNA is not processed by Dicer and undergo degradation. Pre-let-7 uridylation is strongly enhanced in the presence of LIN28A (PubMed:22898984). In the absence of LIN28A, TUT7 and TUT4 monouridylate group II pre-miRNAs, which includes most of pre-let7 members, that shapes an optimal 3' end overhang for efficient processing (PubMed:25979828, PubMed:28671666). Add oligo-U tails to truncated pre-miRNAS with a 5' overhang which may promote rapid degradation of non-functional pre-miRNA species (PubMed:25979828). Does not play a role in replication-dependent histone mRNA degradation (PubMed:18172165). Due to functional redundancy between TUT4 and TUT7, the identification of the specific role of each of these proteins is difficult (PubMed:18172165, PubMed:19703396, PubMed:22898984, PubMed:25480299, PubMed:25979828, PubMed:28671666). TUT4 and TUT7 restrict retrotransposition of long interspersed element-1 (LINE-1) in cooperation with MOV10 counteracting the RNA chaperonne activity of L1RE1. TUT7 uridylates LINE-1 mRNAs in the cytoplasm which inhibits initiation of reverse transcription once in the nucleus, whereas uridylation by TUT4 destabilizes mRNAs in cytoplasmic ribonucleoprotein granules (PubMed:30122351).</text>
</comment>
<comment type="catalytic activity">
    <reaction evidence="6">
        <text>RNA(n) + UTP = RNA(n)-3'-uridine ribonucleotide + diphosphate</text>
        <dbReference type="Rhea" id="RHEA:14785"/>
        <dbReference type="Rhea" id="RHEA-COMP:14527"/>
        <dbReference type="Rhea" id="RHEA-COMP:17348"/>
        <dbReference type="ChEBI" id="CHEBI:33019"/>
        <dbReference type="ChEBI" id="CHEBI:46398"/>
        <dbReference type="ChEBI" id="CHEBI:140395"/>
        <dbReference type="ChEBI" id="CHEBI:173116"/>
        <dbReference type="EC" id="2.7.7.52"/>
    </reaction>
</comment>
<comment type="cofactor">
    <cofactor evidence="1">
        <name>Mg(2+)</name>
        <dbReference type="ChEBI" id="CHEBI:18420"/>
    </cofactor>
    <cofactor evidence="1">
        <name>Mn(2+)</name>
        <dbReference type="ChEBI" id="CHEBI:29035"/>
    </cofactor>
</comment>
<comment type="subunit">
    <text evidence="13">Interacts with MOV10; the interaction is RNA-dependent.</text>
</comment>
<comment type="interaction">
    <interactant intactId="EBI-9088812">
        <id>Q5VYS8-5</id>
    </interactant>
    <interactant intactId="EBI-6875961">
        <id>P02489</id>
        <label>CRYAA</label>
    </interactant>
    <organismsDiffer>false</organismsDiffer>
    <experiments>3</experiments>
</comment>
<comment type="interaction">
    <interactant intactId="EBI-9088812">
        <id>Q5VYS8-5</id>
    </interactant>
    <interactant intactId="EBI-744302">
        <id>P14136</id>
        <label>GFAP</label>
    </interactant>
    <organismsDiffer>false</organismsDiffer>
    <experiments>3</experiments>
</comment>
<comment type="interaction">
    <interactant intactId="EBI-9088812">
        <id>Q5VYS8-5</id>
    </interactant>
    <interactant intactId="EBI-25913156">
        <id>O14908-2</id>
        <label>GIPC1</label>
    </interactant>
    <organismsDiffer>false</organismsDiffer>
    <experiments>3</experiments>
</comment>
<comment type="interaction">
    <interactant intactId="EBI-9088812">
        <id>Q5VYS8-5</id>
    </interactant>
    <interactant intactId="EBI-747754">
        <id>P28799</id>
        <label>GRN</label>
    </interactant>
    <organismsDiffer>false</organismsDiffer>
    <experiments>3</experiments>
</comment>
<comment type="interaction">
    <interactant intactId="EBI-9088812">
        <id>Q5VYS8-5</id>
    </interactant>
    <interactant intactId="EBI-352682">
        <id>P04792</id>
        <label>HSPB1</label>
    </interactant>
    <organismsDiffer>false</organismsDiffer>
    <experiments>3</experiments>
</comment>
<comment type="interaction">
    <interactant intactId="EBI-9088812">
        <id>Q5VYS8-5</id>
    </interactant>
    <interactant intactId="EBI-1055254">
        <id>Q8WXH2</id>
        <label>JPH3</label>
    </interactant>
    <organismsDiffer>false</organismsDiffer>
    <experiments>3</experiments>
</comment>
<comment type="interaction">
    <interactant intactId="EBI-9088812">
        <id>Q5VYS8-5</id>
    </interactant>
    <interactant intactId="EBI-10975473">
        <id>O60333-2</id>
        <label>KIF1B</label>
    </interactant>
    <organismsDiffer>false</organismsDiffer>
    <experiments>3</experiments>
</comment>
<comment type="interaction">
    <interactant intactId="EBI-9088812">
        <id>Q5VYS8-5</id>
    </interactant>
    <interactant intactId="EBI-2432309">
        <id>Q92876</id>
        <label>KLK6</label>
    </interactant>
    <organismsDiffer>false</organismsDiffer>
    <experiments>3</experiments>
</comment>
<comment type="interaction">
    <interactant intactId="EBI-9088812">
        <id>Q5VYS8-5</id>
    </interactant>
    <interactant intactId="EBI-351935">
        <id>P02545</id>
        <label>LMNA</label>
    </interactant>
    <organismsDiffer>false</organismsDiffer>
    <experiments>3</experiments>
</comment>
<comment type="interaction">
    <interactant intactId="EBI-9088812">
        <id>Q5VYS8-5</id>
    </interactant>
    <interactant intactId="EBI-713665">
        <id>P19404</id>
        <label>NDUFV2</label>
    </interactant>
    <organismsDiffer>false</organismsDiffer>
    <experiments>3</experiments>
</comment>
<comment type="interaction">
    <interactant intactId="EBI-9088812">
        <id>Q5VYS8-5</id>
    </interactant>
    <interactant intactId="EBI-475646">
        <id>P07196</id>
        <label>NEFL</label>
    </interactant>
    <organismsDiffer>false</organismsDiffer>
    <experiments>3</experiments>
</comment>
<comment type="interaction">
    <interactant intactId="EBI-9088812">
        <id>Q5VYS8-5</id>
    </interactant>
    <interactant intactId="EBI-1014472">
        <id>P35240</id>
        <label>NF2</label>
    </interactant>
    <organismsDiffer>false</organismsDiffer>
    <experiments>3</experiments>
</comment>
<comment type="interaction">
    <interactant intactId="EBI-9088812">
        <id>Q5VYS8-5</id>
    </interactant>
    <interactant intactId="EBI-748974">
        <id>Q96CV9</id>
        <label>OPTN</label>
    </interactant>
    <organismsDiffer>false</organismsDiffer>
    <experiments>3</experiments>
</comment>
<comment type="interaction">
    <interactant intactId="EBI-9088812">
        <id>Q5VYS8-5</id>
    </interactant>
    <interactant intactId="EBI-716404">
        <id>P16284</id>
        <label>PECAM1</label>
    </interactant>
    <organismsDiffer>false</organismsDiffer>
    <experiments>3</experiments>
</comment>
<comment type="interaction">
    <interactant intactId="EBI-9088812">
        <id>Q5VYS8-5</id>
    </interactant>
    <interactant intactId="EBI-749195">
        <id>P60891</id>
        <label>PRPS1</label>
    </interactant>
    <organismsDiffer>false</organismsDiffer>
    <experiments>3</experiments>
</comment>
<comment type="interaction">
    <interactant intactId="EBI-9088812">
        <id>Q5VYS8-5</id>
    </interactant>
    <interactant intactId="EBI-5235340">
        <id>Q7Z699</id>
        <label>SPRED1</label>
    </interactant>
    <organismsDiffer>false</organismsDiffer>
    <experiments>3</experiments>
</comment>
<comment type="interaction">
    <interactant intactId="EBI-9088812">
        <id>Q5VYS8-5</id>
    </interactant>
    <interactant intactId="EBI-353844">
        <id>P08670</id>
        <label>VIM</label>
    </interactant>
    <organismsDiffer>false</organismsDiffer>
    <experiments>3</experiments>
</comment>
<comment type="interaction">
    <interactant intactId="EBI-9088812">
        <id>Q5VYS8-5</id>
    </interactant>
    <interactant intactId="EBI-720609">
        <id>O76024</id>
        <label>WFS1</label>
    </interactant>
    <organismsDiffer>false</organismsDiffer>
    <experiments>3</experiments>
</comment>
<comment type="subcellular location">
    <subcellularLocation>
        <location evidence="10 13">Cytoplasm</location>
    </subcellularLocation>
    <text evidence="13">Expression is pancytoplasmic in contrast with TUT4 expression which is enriched in cytoplasmic ribonucleoprotein granules.</text>
</comment>
<comment type="alternative products">
    <event type="alternative splicing"/>
    <isoform>
        <id>Q5VYS8-1</id>
        <name>1</name>
        <sequence type="displayed"/>
    </isoform>
    <isoform>
        <id>Q5VYS8-2</id>
        <name>2</name>
        <sequence type="described" ref="VSP_013837 VSP_013838"/>
    </isoform>
    <isoform>
        <id>Q5VYS8-3</id>
        <name>3</name>
        <sequence type="described" ref="VSP_013835 VSP_013836"/>
    </isoform>
    <isoform>
        <id>Q5VYS8-4</id>
        <name>4</name>
        <sequence type="described" ref="VSP_013832 VSP_013839"/>
    </isoform>
    <isoform>
        <id>Q5VYS8-5</id>
        <name>5</name>
        <sequence type="described" ref="VSP_013833 VSP_013834"/>
    </isoform>
    <isoform>
        <id>Q5VYS8-6</id>
        <name>6</name>
        <sequence type="described" ref="VSP_013840"/>
    </isoform>
</comment>
<comment type="domain">
    <text evidence="12">Utilizes two multidomain functional modules during the switch from monouridylation to oligouridylation. The catalytic module (containing the 3 CCHC-type Zinc finger domains) is essential for both activities while the Lin28-interacting module (LIM) at the N-terminal part is indispensable for oligouridylation.</text>
</comment>
<comment type="similarity">
    <text evidence="17">Belongs to the DNA polymerase type-B-like family.</text>
</comment>
<comment type="sequence caution" evidence="17">
    <conflict type="erroneous initiation">
        <sequence resource="EMBL-CDS" id="BAB14584"/>
    </conflict>
    <text>Truncated N-terminus.</text>
</comment>
<comment type="sequence caution" evidence="17">
    <conflict type="erroneous initiation">
        <sequence resource="EMBL-CDS" id="BAB71052"/>
    </conflict>
    <text>Truncated N-terminus.</text>
</comment>
<organism>
    <name type="scientific">Homo sapiens</name>
    <name type="common">Human</name>
    <dbReference type="NCBI Taxonomy" id="9606"/>
    <lineage>
        <taxon>Eukaryota</taxon>
        <taxon>Metazoa</taxon>
        <taxon>Chordata</taxon>
        <taxon>Craniata</taxon>
        <taxon>Vertebrata</taxon>
        <taxon>Euteleostomi</taxon>
        <taxon>Mammalia</taxon>
        <taxon>Eutheria</taxon>
        <taxon>Euarchontoglires</taxon>
        <taxon>Primates</taxon>
        <taxon>Haplorrhini</taxon>
        <taxon>Catarrhini</taxon>
        <taxon>Hominidae</taxon>
        <taxon>Homo</taxon>
    </lineage>
</organism>
<protein>
    <recommendedName>
        <fullName evidence="17">Terminal uridylyltransferase 7</fullName>
        <shortName evidence="17">TUTase 7</shortName>
        <ecNumber evidence="6">2.7.7.52</ecNumber>
    </recommendedName>
    <alternativeName>
        <fullName>Zinc finger CCHC domain-containing protein 6</fullName>
    </alternativeName>
</protein>
<reference key="1">
    <citation type="journal article" date="2007" name="BMC Genomics">
        <title>The full-ORF clone resource of the German cDNA consortium.</title>
        <authorList>
            <person name="Bechtel S."/>
            <person name="Rosenfelder H."/>
            <person name="Duda A."/>
            <person name="Schmidt C.P."/>
            <person name="Ernst U."/>
            <person name="Wellenreuther R."/>
            <person name="Mehrle A."/>
            <person name="Schuster C."/>
            <person name="Bahr A."/>
            <person name="Bloecker H."/>
            <person name="Heubner D."/>
            <person name="Hoerlein A."/>
            <person name="Michel G."/>
            <person name="Wedler H."/>
            <person name="Koehrer K."/>
            <person name="Ottenwaelder B."/>
            <person name="Poustka A."/>
            <person name="Wiemann S."/>
            <person name="Schupp I."/>
        </authorList>
    </citation>
    <scope>NUCLEOTIDE SEQUENCE [LARGE SCALE MRNA] (ISOFORMS 1; 2; 3 AND 4)</scope>
    <source>
        <tissue>Cervix</tissue>
        <tissue>Endometrial tumor</tissue>
        <tissue>Fetal kidney</tissue>
        <tissue>Skeletal muscle</tissue>
    </source>
</reference>
<reference key="2">
    <citation type="journal article" date="2004" name="Nature">
        <title>DNA sequence and analysis of human chromosome 9.</title>
        <authorList>
            <person name="Humphray S.J."/>
            <person name="Oliver K."/>
            <person name="Hunt A.R."/>
            <person name="Plumb R.W."/>
            <person name="Loveland J.E."/>
            <person name="Howe K.L."/>
            <person name="Andrews T.D."/>
            <person name="Searle S."/>
            <person name="Hunt S.E."/>
            <person name="Scott C.E."/>
            <person name="Jones M.C."/>
            <person name="Ainscough R."/>
            <person name="Almeida J.P."/>
            <person name="Ambrose K.D."/>
            <person name="Ashwell R.I.S."/>
            <person name="Babbage A.K."/>
            <person name="Babbage S."/>
            <person name="Bagguley C.L."/>
            <person name="Bailey J."/>
            <person name="Banerjee R."/>
            <person name="Barker D.J."/>
            <person name="Barlow K.F."/>
            <person name="Bates K."/>
            <person name="Beasley H."/>
            <person name="Beasley O."/>
            <person name="Bird C.P."/>
            <person name="Bray-Allen S."/>
            <person name="Brown A.J."/>
            <person name="Brown J.Y."/>
            <person name="Burford D."/>
            <person name="Burrill W."/>
            <person name="Burton J."/>
            <person name="Carder C."/>
            <person name="Carter N.P."/>
            <person name="Chapman J.C."/>
            <person name="Chen Y."/>
            <person name="Clarke G."/>
            <person name="Clark S.Y."/>
            <person name="Clee C.M."/>
            <person name="Clegg S."/>
            <person name="Collier R.E."/>
            <person name="Corby N."/>
            <person name="Crosier M."/>
            <person name="Cummings A.T."/>
            <person name="Davies J."/>
            <person name="Dhami P."/>
            <person name="Dunn M."/>
            <person name="Dutta I."/>
            <person name="Dyer L.W."/>
            <person name="Earthrowl M.E."/>
            <person name="Faulkner L."/>
            <person name="Fleming C.J."/>
            <person name="Frankish A."/>
            <person name="Frankland J.A."/>
            <person name="French L."/>
            <person name="Fricker D.G."/>
            <person name="Garner P."/>
            <person name="Garnett J."/>
            <person name="Ghori J."/>
            <person name="Gilbert J.G.R."/>
            <person name="Glison C."/>
            <person name="Grafham D.V."/>
            <person name="Gribble S."/>
            <person name="Griffiths C."/>
            <person name="Griffiths-Jones S."/>
            <person name="Grocock R."/>
            <person name="Guy J."/>
            <person name="Hall R.E."/>
            <person name="Hammond S."/>
            <person name="Harley J.L."/>
            <person name="Harrison E.S.I."/>
            <person name="Hart E.A."/>
            <person name="Heath P.D."/>
            <person name="Henderson C.D."/>
            <person name="Hopkins B.L."/>
            <person name="Howard P.J."/>
            <person name="Howden P.J."/>
            <person name="Huckle E."/>
            <person name="Johnson C."/>
            <person name="Johnson D."/>
            <person name="Joy A.A."/>
            <person name="Kay M."/>
            <person name="Keenan S."/>
            <person name="Kershaw J.K."/>
            <person name="Kimberley A.M."/>
            <person name="King A."/>
            <person name="Knights A."/>
            <person name="Laird G.K."/>
            <person name="Langford C."/>
            <person name="Lawlor S."/>
            <person name="Leongamornlert D.A."/>
            <person name="Leversha M."/>
            <person name="Lloyd C."/>
            <person name="Lloyd D.M."/>
            <person name="Lovell J."/>
            <person name="Martin S."/>
            <person name="Mashreghi-Mohammadi M."/>
            <person name="Matthews L."/>
            <person name="McLaren S."/>
            <person name="McLay K.E."/>
            <person name="McMurray A."/>
            <person name="Milne S."/>
            <person name="Nickerson T."/>
            <person name="Nisbett J."/>
            <person name="Nordsiek G."/>
            <person name="Pearce A.V."/>
            <person name="Peck A.I."/>
            <person name="Porter K.M."/>
            <person name="Pandian R."/>
            <person name="Pelan S."/>
            <person name="Phillimore B."/>
            <person name="Povey S."/>
            <person name="Ramsey Y."/>
            <person name="Rand V."/>
            <person name="Scharfe M."/>
            <person name="Sehra H.K."/>
            <person name="Shownkeen R."/>
            <person name="Sims S.K."/>
            <person name="Skuce C.D."/>
            <person name="Smith M."/>
            <person name="Steward C.A."/>
            <person name="Swarbreck D."/>
            <person name="Sycamore N."/>
            <person name="Tester J."/>
            <person name="Thorpe A."/>
            <person name="Tracey A."/>
            <person name="Tromans A."/>
            <person name="Thomas D.W."/>
            <person name="Wall M."/>
            <person name="Wallis J.M."/>
            <person name="West A.P."/>
            <person name="Whitehead S.L."/>
            <person name="Willey D.L."/>
            <person name="Williams S.A."/>
            <person name="Wilming L."/>
            <person name="Wray P.W."/>
            <person name="Young L."/>
            <person name="Ashurst J.L."/>
            <person name="Coulson A."/>
            <person name="Blocker H."/>
            <person name="Durbin R.M."/>
            <person name="Sulston J.E."/>
            <person name="Hubbard T."/>
            <person name="Jackson M.J."/>
            <person name="Bentley D.R."/>
            <person name="Beck S."/>
            <person name="Rogers J."/>
            <person name="Dunham I."/>
        </authorList>
    </citation>
    <scope>NUCLEOTIDE SEQUENCE [LARGE SCALE GENOMIC DNA]</scope>
</reference>
<reference key="3">
    <citation type="journal article" date="2004" name="Genome Res.">
        <title>The status, quality, and expansion of the NIH full-length cDNA project: the Mammalian Gene Collection (MGC).</title>
        <authorList>
            <consortium name="The MGC Project Team"/>
        </authorList>
    </citation>
    <scope>NUCLEOTIDE SEQUENCE [LARGE SCALE MRNA] (ISOFORM 5)</scope>
    <source>
        <tissue>Brain</tissue>
    </source>
</reference>
<reference key="4">
    <citation type="journal article" date="2004" name="Nat. Genet.">
        <title>Complete sequencing and characterization of 21,243 full-length human cDNAs.</title>
        <authorList>
            <person name="Ota T."/>
            <person name="Suzuki Y."/>
            <person name="Nishikawa T."/>
            <person name="Otsuki T."/>
            <person name="Sugiyama T."/>
            <person name="Irie R."/>
            <person name="Wakamatsu A."/>
            <person name="Hayashi K."/>
            <person name="Sato H."/>
            <person name="Nagai K."/>
            <person name="Kimura K."/>
            <person name="Makita H."/>
            <person name="Sekine M."/>
            <person name="Obayashi M."/>
            <person name="Nishi T."/>
            <person name="Shibahara T."/>
            <person name="Tanaka T."/>
            <person name="Ishii S."/>
            <person name="Yamamoto J."/>
            <person name="Saito K."/>
            <person name="Kawai Y."/>
            <person name="Isono Y."/>
            <person name="Nakamura Y."/>
            <person name="Nagahari K."/>
            <person name="Murakami K."/>
            <person name="Yasuda T."/>
            <person name="Iwayanagi T."/>
            <person name="Wagatsuma M."/>
            <person name="Shiratori A."/>
            <person name="Sudo H."/>
            <person name="Hosoiri T."/>
            <person name="Kaku Y."/>
            <person name="Kodaira H."/>
            <person name="Kondo H."/>
            <person name="Sugawara M."/>
            <person name="Takahashi M."/>
            <person name="Kanda K."/>
            <person name="Yokoi T."/>
            <person name="Furuya T."/>
            <person name="Kikkawa E."/>
            <person name="Omura Y."/>
            <person name="Abe K."/>
            <person name="Kamihara K."/>
            <person name="Katsuta N."/>
            <person name="Sato K."/>
            <person name="Tanikawa M."/>
            <person name="Yamazaki M."/>
            <person name="Ninomiya K."/>
            <person name="Ishibashi T."/>
            <person name="Yamashita H."/>
            <person name="Murakawa K."/>
            <person name="Fujimori K."/>
            <person name="Tanai H."/>
            <person name="Kimata M."/>
            <person name="Watanabe M."/>
            <person name="Hiraoka S."/>
            <person name="Chiba Y."/>
            <person name="Ishida S."/>
            <person name="Ono Y."/>
            <person name="Takiguchi S."/>
            <person name="Watanabe S."/>
            <person name="Yosida M."/>
            <person name="Hotuta T."/>
            <person name="Kusano J."/>
            <person name="Kanehori K."/>
            <person name="Takahashi-Fujii A."/>
            <person name="Hara H."/>
            <person name="Tanase T.-O."/>
            <person name="Nomura Y."/>
            <person name="Togiya S."/>
            <person name="Komai F."/>
            <person name="Hara R."/>
            <person name="Takeuchi K."/>
            <person name="Arita M."/>
            <person name="Imose N."/>
            <person name="Musashino K."/>
            <person name="Yuuki H."/>
            <person name="Oshima A."/>
            <person name="Sasaki N."/>
            <person name="Aotsuka S."/>
            <person name="Yoshikawa Y."/>
            <person name="Matsunawa H."/>
            <person name="Ichihara T."/>
            <person name="Shiohata N."/>
            <person name="Sano S."/>
            <person name="Moriya S."/>
            <person name="Momiyama H."/>
            <person name="Satoh N."/>
            <person name="Takami S."/>
            <person name="Terashima Y."/>
            <person name="Suzuki O."/>
            <person name="Nakagawa S."/>
            <person name="Senoh A."/>
            <person name="Mizoguchi H."/>
            <person name="Goto Y."/>
            <person name="Shimizu F."/>
            <person name="Wakebe H."/>
            <person name="Hishigaki H."/>
            <person name="Watanabe T."/>
            <person name="Sugiyama A."/>
            <person name="Takemoto M."/>
            <person name="Kawakami B."/>
            <person name="Yamazaki M."/>
            <person name="Watanabe K."/>
            <person name="Kumagai A."/>
            <person name="Itakura S."/>
            <person name="Fukuzumi Y."/>
            <person name="Fujimori Y."/>
            <person name="Komiyama M."/>
            <person name="Tashiro H."/>
            <person name="Tanigami A."/>
            <person name="Fujiwara T."/>
            <person name="Ono T."/>
            <person name="Yamada K."/>
            <person name="Fujii Y."/>
            <person name="Ozaki K."/>
            <person name="Hirao M."/>
            <person name="Ohmori Y."/>
            <person name="Kawabata A."/>
            <person name="Hikiji T."/>
            <person name="Kobatake N."/>
            <person name="Inagaki H."/>
            <person name="Ikema Y."/>
            <person name="Okamoto S."/>
            <person name="Okitani R."/>
            <person name="Kawakami T."/>
            <person name="Noguchi S."/>
            <person name="Itoh T."/>
            <person name="Shigeta K."/>
            <person name="Senba T."/>
            <person name="Matsumura K."/>
            <person name="Nakajima Y."/>
            <person name="Mizuno T."/>
            <person name="Morinaga M."/>
            <person name="Sasaki M."/>
            <person name="Togashi T."/>
            <person name="Oyama M."/>
            <person name="Hata H."/>
            <person name="Watanabe M."/>
            <person name="Komatsu T."/>
            <person name="Mizushima-Sugano J."/>
            <person name="Satoh T."/>
            <person name="Shirai Y."/>
            <person name="Takahashi Y."/>
            <person name="Nakagawa K."/>
            <person name="Okumura K."/>
            <person name="Nagase T."/>
            <person name="Nomura N."/>
            <person name="Kikuchi H."/>
            <person name="Masuho Y."/>
            <person name="Yamashita R."/>
            <person name="Nakai K."/>
            <person name="Yada T."/>
            <person name="Nakamura Y."/>
            <person name="Ohara O."/>
            <person name="Isogai T."/>
            <person name="Sugano S."/>
        </authorList>
    </citation>
    <scope>NUCLEOTIDE SEQUENCE [LARGE SCALE MRNA] OF 1-1385 (ISOFORM 1)</scope>
    <scope>NUCLEOTIDE SEQUENCE [LARGE SCALE MRNA] OF 1019-1495 (ISOFORM 6)</scope>
    <source>
        <tissue>Placenta</tissue>
    </source>
</reference>
<reference key="5">
    <citation type="journal article" date="2000" name="DNA Res.">
        <title>Prediction of the coding sequences of unidentified human genes. XIX. The complete sequences of 100 new cDNA clones from brain which code for large proteins in vitro.</title>
        <authorList>
            <person name="Nagase T."/>
            <person name="Kikuno R."/>
            <person name="Hattori A."/>
            <person name="Kondo Y."/>
            <person name="Okumura K."/>
            <person name="Ohara O."/>
        </authorList>
    </citation>
    <scope>NUCLEOTIDE SEQUENCE [LARGE SCALE MRNA] OF 406-1495 (ISOFORM 1)</scope>
    <source>
        <tissue>Brain</tissue>
    </source>
</reference>
<reference key="6">
    <citation type="journal article" date="2008" name="Genes Dev.">
        <title>Degradation of histone mRNA requires oligouridylation followed by decapping and simultaneous degradation of the mRNA both 5' to 3' and 3' to 5'.</title>
        <authorList>
            <person name="Mullen T.E."/>
            <person name="Marzluff W.F."/>
        </authorList>
    </citation>
    <scope>ABSENCE OF FUNCTION IN HISTONE MRNA DEGRADATION ACTIVITY</scope>
</reference>
<reference key="7">
    <citation type="journal article" date="2007" name="Mol. Cell. Biol.">
        <title>Efficient RNA polyuridylation by noncanonical poly(A) polymerases.</title>
        <authorList>
            <person name="Rissland O.S."/>
            <person name="Mikulasova A."/>
            <person name="Norbury C.J."/>
        </authorList>
    </citation>
    <scope>CATALYTIC ACTIVITY</scope>
</reference>
<reference key="8">
    <citation type="journal article" date="2008" name="Proc. Natl. Acad. Sci. U.S.A.">
        <title>A quantitative atlas of mitotic phosphorylation.</title>
        <authorList>
            <person name="Dephoure N."/>
            <person name="Zhou C."/>
            <person name="Villen J."/>
            <person name="Beausoleil S.A."/>
            <person name="Bakalarski C.E."/>
            <person name="Elledge S.J."/>
            <person name="Gygi S.P."/>
        </authorList>
    </citation>
    <scope>PHOSPHORYLATION [LARGE SCALE ANALYSIS] AT THR-57; THR-64; SER-172 AND SER-844</scope>
    <scope>IDENTIFICATION BY MASS SPECTROMETRY [LARGE SCALE ANALYSIS]</scope>
    <source>
        <tissue>Cervix carcinoma</tissue>
    </source>
</reference>
<reference key="9">
    <citation type="journal article" date="2009" name="Anal. Chem.">
        <title>Lys-N and trypsin cover complementary parts of the phosphoproteome in a refined SCX-based approach.</title>
        <authorList>
            <person name="Gauci S."/>
            <person name="Helbig A.O."/>
            <person name="Slijper M."/>
            <person name="Krijgsveld J."/>
            <person name="Heck A.J."/>
            <person name="Mohammed S."/>
        </authorList>
    </citation>
    <scope>IDENTIFICATION BY MASS SPECTROMETRY [LARGE SCALE ANALYSIS]</scope>
</reference>
<reference key="10">
    <citation type="journal article" date="2009" name="Cell">
        <title>TUT4 in concert with Lin28 suppresses MicroRNA biogenesis through pre-microRNA uridylation.</title>
        <authorList>
            <person name="Heo I."/>
            <person name="Joo C."/>
            <person name="Kim Y.-K."/>
            <person name="Ha M."/>
            <person name="Yoon M.-J."/>
            <person name="Cho J."/>
            <person name="Yeom K.-H."/>
            <person name="Han J."/>
            <person name="Kim V.N."/>
        </authorList>
    </citation>
    <scope>FUNCTION</scope>
</reference>
<reference key="11">
    <citation type="journal article" date="2010" name="Sci. Signal.">
        <title>Quantitative phosphoproteomics reveals widespread full phosphorylation site occupancy during mitosis.</title>
        <authorList>
            <person name="Olsen J.V."/>
            <person name="Vermeulen M."/>
            <person name="Santamaria A."/>
            <person name="Kumar C."/>
            <person name="Miller M.L."/>
            <person name="Jensen L.J."/>
            <person name="Gnad F."/>
            <person name="Cox J."/>
            <person name="Jensen T.S."/>
            <person name="Nigg E.A."/>
            <person name="Brunak S."/>
            <person name="Mann M."/>
        </authorList>
    </citation>
    <scope>PHOSPHORYLATION [LARGE SCALE ANALYSIS] AT SER-939</scope>
    <scope>IDENTIFICATION BY MASS SPECTROMETRY [LARGE SCALE ANALYSIS]</scope>
    <source>
        <tissue>Cervix carcinoma</tissue>
    </source>
</reference>
<reference key="12">
    <citation type="journal article" date="2011" name="BMC Syst. Biol.">
        <title>Initial characterization of the human central proteome.</title>
        <authorList>
            <person name="Burkard T.R."/>
            <person name="Planyavsky M."/>
            <person name="Kaupe I."/>
            <person name="Breitwieser F.P."/>
            <person name="Buerckstuemmer T."/>
            <person name="Bennett K.L."/>
            <person name="Superti-Furga G."/>
            <person name="Colinge J."/>
        </authorList>
    </citation>
    <scope>IDENTIFICATION BY MASS SPECTROMETRY [LARGE SCALE ANALYSIS]</scope>
</reference>
<reference key="13">
    <citation type="journal article" date="2011" name="Sci. Signal.">
        <title>System-wide temporal characterization of the proteome and phosphoproteome of human embryonic stem cell differentiation.</title>
        <authorList>
            <person name="Rigbolt K.T."/>
            <person name="Prokhorova T.A."/>
            <person name="Akimov V."/>
            <person name="Henningsen J."/>
            <person name="Johansen P.T."/>
            <person name="Kratchmarova I."/>
            <person name="Kassem M."/>
            <person name="Mann M."/>
            <person name="Olsen J.V."/>
            <person name="Blagoev B."/>
        </authorList>
    </citation>
    <scope>PHOSPHORYLATION [LARGE SCALE ANALYSIS] AT SER-939</scope>
    <scope>IDENTIFICATION BY MASS SPECTROMETRY [LARGE SCALE ANALYSIS]</scope>
</reference>
<reference key="14">
    <citation type="journal article" date="2012" name="RNA">
        <title>Lin28-mediated control of let-7 microRNA expression by alternative TUTases Zcchc11 (TUT4) and Zcchc6 (TUT7).</title>
        <authorList>
            <person name="Thornton J.E."/>
            <person name="Chang H.M."/>
            <person name="Piskounova E."/>
            <person name="Gregory R.I."/>
        </authorList>
    </citation>
    <scope>FUNCTION IN PRE-LET-7 URIDYLATION</scope>
</reference>
<reference key="15">
    <citation type="journal article" date="2013" name="J. Proteome Res.">
        <title>Toward a comprehensive characterization of a human cancer cell phosphoproteome.</title>
        <authorList>
            <person name="Zhou H."/>
            <person name="Di Palma S."/>
            <person name="Preisinger C."/>
            <person name="Peng M."/>
            <person name="Polat A.N."/>
            <person name="Heck A.J."/>
            <person name="Mohammed S."/>
        </authorList>
    </citation>
    <scope>PHOSPHORYLATION [LARGE SCALE ANALYSIS] AT THR-64 AND SER-600</scope>
    <scope>IDENTIFICATION BY MASS SPECTROMETRY [LARGE SCALE ANALYSIS]</scope>
    <source>
        <tissue>Cervix carcinoma</tissue>
        <tissue>Erythroleukemia</tissue>
    </source>
</reference>
<reference key="16">
    <citation type="journal article" date="2014" name="Cell">
        <title>Uridylation by TUT4 and TUT7 marks mRNA for degradation.</title>
        <authorList>
            <person name="Lim J."/>
            <person name="Ha M."/>
            <person name="Chang H."/>
            <person name="Kwon S.C."/>
            <person name="Simanshu D.K."/>
            <person name="Patel D.J."/>
            <person name="Kim V.N."/>
        </authorList>
    </citation>
    <scope>FUNCTION</scope>
    <scope>SUBCELLULAR LOCATION</scope>
</reference>
<reference key="17">
    <citation type="journal article" date="2014" name="J. Proteomics">
        <title>An enzyme assisted RP-RPLC approach for in-depth analysis of human liver phosphoproteome.</title>
        <authorList>
            <person name="Bian Y."/>
            <person name="Song C."/>
            <person name="Cheng K."/>
            <person name="Dong M."/>
            <person name="Wang F."/>
            <person name="Huang J."/>
            <person name="Sun D."/>
            <person name="Wang L."/>
            <person name="Ye M."/>
            <person name="Zou H."/>
        </authorList>
    </citation>
    <scope>IDENTIFICATION BY MASS SPECTROMETRY [LARGE SCALE ANALYSIS]</scope>
    <source>
        <tissue>Liver</tissue>
    </source>
</reference>
<reference key="18">
    <citation type="journal article" date="2015" name="EMBO J.">
        <title>TUT7 controls the fate of precursor microRNAs by using three different uridylation mechanisms.</title>
        <authorList>
            <person name="Kim B."/>
            <person name="Ha M."/>
            <person name="Loeff L."/>
            <person name="Chang H."/>
            <person name="Simanshu D.K."/>
            <person name="Li S."/>
            <person name="Fareh M."/>
            <person name="Patel D.J."/>
            <person name="Joo C."/>
            <person name="Kim V.N."/>
        </authorList>
    </citation>
    <scope>FUNCTION</scope>
</reference>
<reference key="19">
    <citation type="journal article" date="2018" name="Cell">
        <title>Uridylation by TUT4/7 Restricts Retrotransposition of Human LINE-1s.</title>
        <authorList>
            <person name="Warkocki Z."/>
            <person name="Krawczyk P.S."/>
            <person name="Adamska D."/>
            <person name="Bijata K."/>
            <person name="Garcia-Perez J.L."/>
            <person name="Dziembowski A."/>
        </authorList>
    </citation>
    <scope>FUNCTION</scope>
    <scope>SUBCELLULAR LOCATION</scope>
    <scope>INTERACTION WITH MOV10</scope>
    <scope>MUTAGENESIS OF ASP-1060</scope>
</reference>
<reference evidence="19 20 21 22" key="20">
    <citation type="journal article" date="2017" name="Nat. Struct. Mol. Biol.">
        <title>Multi-domain utilization by TUT4 and TUT7 in control of let-7 biogenesis.</title>
        <authorList>
            <person name="Faehnle C.R."/>
            <person name="Walleshauser J."/>
            <person name="Joshua-Tor L."/>
        </authorList>
    </citation>
    <scope>X-RAY CRYSTALLOGRAPHY (2.30 ANGSTROMS) OF 983-1365 IN COMPLEX WITH DSRNA; UTP AND ZINC</scope>
    <scope>FUNCTION</scope>
    <scope>DOMAIN</scope>
    <scope>MUTAGENESIS OF 1097-LEU--ILE-1099</scope>
</reference>
<name>TUT7_HUMAN</name>
<dbReference type="EC" id="2.7.7.52" evidence="6"/>
<dbReference type="EMBL" id="AL832026">
    <property type="protein sequence ID" value="CAH56219.1"/>
    <property type="molecule type" value="mRNA"/>
</dbReference>
<dbReference type="EMBL" id="AL832193">
    <property type="protein sequence ID" value="CAH56214.1"/>
    <property type="molecule type" value="mRNA"/>
</dbReference>
<dbReference type="EMBL" id="BX641077">
    <property type="protein sequence ID" value="CAE46038.1"/>
    <property type="molecule type" value="mRNA"/>
</dbReference>
<dbReference type="EMBL" id="CR933643">
    <property type="protein sequence ID" value="CAI45944.1"/>
    <property type="molecule type" value="mRNA"/>
</dbReference>
<dbReference type="EMBL" id="CR933644">
    <property type="protein sequence ID" value="CAI45945.1"/>
    <property type="molecule type" value="mRNA"/>
</dbReference>
<dbReference type="EMBL" id="CR936608">
    <property type="protein sequence ID" value="CAI56753.1"/>
    <property type="molecule type" value="mRNA"/>
</dbReference>
<dbReference type="EMBL" id="AL137849">
    <property type="status" value="NOT_ANNOTATED_CDS"/>
    <property type="molecule type" value="Genomic_DNA"/>
</dbReference>
<dbReference type="EMBL" id="AL353678">
    <property type="status" value="NOT_ANNOTATED_CDS"/>
    <property type="molecule type" value="Genomic_DNA"/>
</dbReference>
<dbReference type="EMBL" id="BC032456">
    <property type="protein sequence ID" value="AAH32456.1"/>
    <property type="molecule type" value="mRNA"/>
</dbReference>
<dbReference type="EMBL" id="AK023471">
    <property type="protein sequence ID" value="BAB14584.1"/>
    <property type="status" value="ALT_INIT"/>
    <property type="molecule type" value="mRNA"/>
</dbReference>
<dbReference type="EMBL" id="AK055546">
    <property type="protein sequence ID" value="BAB70951.1"/>
    <property type="molecule type" value="mRNA"/>
</dbReference>
<dbReference type="EMBL" id="AK055948">
    <property type="protein sequence ID" value="BAB71052.1"/>
    <property type="status" value="ALT_INIT"/>
    <property type="molecule type" value="mRNA"/>
</dbReference>
<dbReference type="EMBL" id="AB051498">
    <property type="protein sequence ID" value="BAB21802.1"/>
    <property type="molecule type" value="mRNA"/>
</dbReference>
<dbReference type="CCDS" id="CCDS35057.1">
    <molecule id="Q5VYS8-1"/>
</dbReference>
<dbReference type="CCDS" id="CCDS55323.1">
    <molecule id="Q5VYS8-4"/>
</dbReference>
<dbReference type="RefSeq" id="NP_001171988.1">
    <molecule id="Q5VYS8-1"/>
    <property type="nucleotide sequence ID" value="NM_001185059.2"/>
</dbReference>
<dbReference type="RefSeq" id="NP_001172003.1">
    <molecule id="Q5VYS8-4"/>
    <property type="nucleotide sequence ID" value="NM_001185074.2"/>
</dbReference>
<dbReference type="RefSeq" id="NP_001317647.1">
    <property type="nucleotide sequence ID" value="NM_001330718.1"/>
</dbReference>
<dbReference type="RefSeq" id="NP_078893.2">
    <molecule id="Q5VYS8-1"/>
    <property type="nucleotide sequence ID" value="NM_024617.3"/>
</dbReference>
<dbReference type="RefSeq" id="XP_016870619.1">
    <molecule id="Q5VYS8-1"/>
    <property type="nucleotide sequence ID" value="XM_017015130.2"/>
</dbReference>
<dbReference type="RefSeq" id="XP_016870620.1">
    <molecule id="Q5VYS8-1"/>
    <property type="nucleotide sequence ID" value="XM_017015131.2"/>
</dbReference>
<dbReference type="RefSeq" id="XP_054219774.1">
    <molecule id="Q5VYS8-1"/>
    <property type="nucleotide sequence ID" value="XM_054363799.1"/>
</dbReference>
<dbReference type="RefSeq" id="XP_054219775.1">
    <molecule id="Q5VYS8-1"/>
    <property type="nucleotide sequence ID" value="XM_054363800.1"/>
</dbReference>
<dbReference type="PDB" id="5W0B">
    <property type="method" value="X-ray"/>
    <property type="resolution" value="2.61 A"/>
    <property type="chains" value="A/B/C=983-1365"/>
</dbReference>
<dbReference type="PDB" id="5W0M">
    <property type="method" value="X-ray"/>
    <property type="resolution" value="2.30 A"/>
    <property type="chains" value="A/B/C=983-1365"/>
</dbReference>
<dbReference type="PDB" id="5W0N">
    <property type="method" value="X-ray"/>
    <property type="resolution" value="2.50 A"/>
    <property type="chains" value="A/B/C=963-1365"/>
</dbReference>
<dbReference type="PDB" id="5W0O">
    <property type="method" value="X-ray"/>
    <property type="resolution" value="2.49 A"/>
    <property type="chains" value="A/B=983-1365"/>
</dbReference>
<dbReference type="PDB" id="8OEF">
    <property type="method" value="EM"/>
    <property type="resolution" value="4.00 A"/>
    <property type="chains" value="A=1-1495"/>
</dbReference>
<dbReference type="PDB" id="8OPP">
    <property type="method" value="EM"/>
    <property type="resolution" value="3.76 A"/>
    <property type="chains" value="A=1-1495"/>
</dbReference>
<dbReference type="PDB" id="8OPS">
    <property type="method" value="EM"/>
    <property type="resolution" value="3.82 A"/>
    <property type="chains" value="A=1-1495"/>
</dbReference>
<dbReference type="PDB" id="8OPT">
    <property type="method" value="EM"/>
    <property type="resolution" value="3.65 A"/>
    <property type="chains" value="A=1-1495"/>
</dbReference>
<dbReference type="PDBsum" id="5W0B"/>
<dbReference type="PDBsum" id="5W0M"/>
<dbReference type="PDBsum" id="5W0N"/>
<dbReference type="PDBsum" id="5W0O"/>
<dbReference type="PDBsum" id="8OEF"/>
<dbReference type="PDBsum" id="8OPP"/>
<dbReference type="PDBsum" id="8OPS"/>
<dbReference type="PDBsum" id="8OPT"/>
<dbReference type="EMDB" id="EMD-16825"/>
<dbReference type="EMDB" id="EMD-17084"/>
<dbReference type="EMDB" id="EMD-17086"/>
<dbReference type="EMDB" id="EMD-17087"/>
<dbReference type="SMR" id="Q5VYS8"/>
<dbReference type="BioGRID" id="122795">
    <property type="interactions" value="152"/>
</dbReference>
<dbReference type="FunCoup" id="Q5VYS8">
    <property type="interactions" value="2688"/>
</dbReference>
<dbReference type="IntAct" id="Q5VYS8">
    <property type="interactions" value="95"/>
</dbReference>
<dbReference type="STRING" id="9606.ENSP00000365130"/>
<dbReference type="GlyGen" id="Q5VYS8">
    <property type="glycosylation" value="1 site"/>
</dbReference>
<dbReference type="iPTMnet" id="Q5VYS8"/>
<dbReference type="PhosphoSitePlus" id="Q5VYS8"/>
<dbReference type="SwissPalm" id="Q5VYS8"/>
<dbReference type="BioMuta" id="ZCCHC6"/>
<dbReference type="DMDM" id="67462100"/>
<dbReference type="jPOST" id="Q5VYS8"/>
<dbReference type="MassIVE" id="Q5VYS8"/>
<dbReference type="PaxDb" id="9606-ENSP00000365130"/>
<dbReference type="PeptideAtlas" id="Q5VYS8"/>
<dbReference type="ProteomicsDB" id="65642">
    <molecule id="Q5VYS8-1"/>
</dbReference>
<dbReference type="ProteomicsDB" id="65643">
    <molecule id="Q5VYS8-2"/>
</dbReference>
<dbReference type="ProteomicsDB" id="65644">
    <molecule id="Q5VYS8-3"/>
</dbReference>
<dbReference type="ProteomicsDB" id="65645">
    <molecule id="Q5VYS8-4"/>
</dbReference>
<dbReference type="ProteomicsDB" id="65646">
    <molecule id="Q5VYS8-5"/>
</dbReference>
<dbReference type="ProteomicsDB" id="65647">
    <molecule id="Q5VYS8-6"/>
</dbReference>
<dbReference type="Pumba" id="Q5VYS8"/>
<dbReference type="Antibodypedia" id="13297">
    <property type="antibodies" value="42 antibodies from 13 providers"/>
</dbReference>
<dbReference type="DNASU" id="79670"/>
<dbReference type="Ensembl" id="ENST00000375960.6">
    <molecule id="Q5VYS8-4"/>
    <property type="protein sequence ID" value="ENSP00000365127.2"/>
    <property type="gene ID" value="ENSG00000083223.18"/>
</dbReference>
<dbReference type="Ensembl" id="ENST00000375963.8">
    <molecule id="Q5VYS8-1"/>
    <property type="protein sequence ID" value="ENSP00000365130.3"/>
    <property type="gene ID" value="ENSG00000083223.18"/>
</dbReference>
<dbReference type="GeneID" id="79670"/>
<dbReference type="KEGG" id="hsa:79670"/>
<dbReference type="MANE-Select" id="ENST00000375963.8">
    <property type="protein sequence ID" value="ENSP00000365130.3"/>
    <property type="RefSeq nucleotide sequence ID" value="NM_024617.4"/>
    <property type="RefSeq protein sequence ID" value="NP_078893.2"/>
</dbReference>
<dbReference type="UCSC" id="uc004aoq.4">
    <molecule id="Q5VYS8-1"/>
    <property type="organism name" value="human"/>
</dbReference>
<dbReference type="AGR" id="HGNC:25817"/>
<dbReference type="CTD" id="79670"/>
<dbReference type="DisGeNET" id="79670"/>
<dbReference type="GeneCards" id="TUT7"/>
<dbReference type="HGNC" id="HGNC:25817">
    <property type="gene designation" value="TUT7"/>
</dbReference>
<dbReference type="HPA" id="ENSG00000083223">
    <property type="expression patterns" value="Low tissue specificity"/>
</dbReference>
<dbReference type="MIM" id="613467">
    <property type="type" value="gene"/>
</dbReference>
<dbReference type="neXtProt" id="NX_Q5VYS8"/>
<dbReference type="OpenTargets" id="ENSG00000083223"/>
<dbReference type="PharmGKB" id="PA134971144"/>
<dbReference type="VEuPathDB" id="HostDB:ENSG00000083223"/>
<dbReference type="eggNOG" id="KOG2277">
    <property type="taxonomic scope" value="Eukaryota"/>
</dbReference>
<dbReference type="GeneTree" id="ENSGT00940000156859"/>
<dbReference type="HOGENOM" id="CLU_003287_1_0_1"/>
<dbReference type="InParanoid" id="Q5VYS8"/>
<dbReference type="OMA" id="EIKCIME"/>
<dbReference type="OrthoDB" id="407432at2759"/>
<dbReference type="PAN-GO" id="Q5VYS8">
    <property type="GO annotations" value="2 GO annotations based on evolutionary models"/>
</dbReference>
<dbReference type="PhylomeDB" id="Q5VYS8"/>
<dbReference type="TreeFam" id="TF315661"/>
<dbReference type="BRENDA" id="2.7.7.52">
    <property type="organism ID" value="2681"/>
</dbReference>
<dbReference type="PathwayCommons" id="Q5VYS8"/>
<dbReference type="Reactome" id="R-HSA-429947">
    <property type="pathway name" value="Deadenylation of mRNA"/>
</dbReference>
<dbReference type="Reactome" id="R-HSA-9819196">
    <property type="pathway name" value="Zygotic genome activation (ZGA)"/>
</dbReference>
<dbReference type="Reactome" id="R-HSA-9820865">
    <property type="pathway name" value="Z-decay: degradation of maternal mRNAs by zygotically expressed factors"/>
</dbReference>
<dbReference type="SignaLink" id="Q5VYS8"/>
<dbReference type="SIGNOR" id="Q5VYS8"/>
<dbReference type="BioGRID-ORCS" id="79670">
    <property type="hits" value="34 hits in 1160 CRISPR screens"/>
</dbReference>
<dbReference type="ChiTaRS" id="ZCCHC6">
    <property type="organism name" value="human"/>
</dbReference>
<dbReference type="GeneWiki" id="ZCCHC6"/>
<dbReference type="GenomeRNAi" id="79670"/>
<dbReference type="Pharos" id="Q5VYS8">
    <property type="development level" value="Tbio"/>
</dbReference>
<dbReference type="PRO" id="PR:Q5VYS8"/>
<dbReference type="Proteomes" id="UP000005640">
    <property type="component" value="Chromosome 9"/>
</dbReference>
<dbReference type="RNAct" id="Q5VYS8">
    <property type="molecule type" value="protein"/>
</dbReference>
<dbReference type="Bgee" id="ENSG00000083223">
    <property type="expression patterns" value="Expressed in tendon of biceps brachii and 191 other cell types or tissues"/>
</dbReference>
<dbReference type="ExpressionAtlas" id="Q5VYS8">
    <property type="expression patterns" value="baseline and differential"/>
</dbReference>
<dbReference type="GO" id="GO:0005737">
    <property type="term" value="C:cytoplasm"/>
    <property type="evidence" value="ECO:0000314"/>
    <property type="project" value="UniProtKB"/>
</dbReference>
<dbReference type="GO" id="GO:0005829">
    <property type="term" value="C:cytosol"/>
    <property type="evidence" value="ECO:0000314"/>
    <property type="project" value="HPA"/>
</dbReference>
<dbReference type="GO" id="GO:0005654">
    <property type="term" value="C:nucleoplasm"/>
    <property type="evidence" value="ECO:0000314"/>
    <property type="project" value="HPA"/>
</dbReference>
<dbReference type="GO" id="GO:0035198">
    <property type="term" value="F:miRNA binding"/>
    <property type="evidence" value="ECO:0000314"/>
    <property type="project" value="UniProtKB"/>
</dbReference>
<dbReference type="GO" id="GO:0003723">
    <property type="term" value="F:RNA binding"/>
    <property type="evidence" value="ECO:0007005"/>
    <property type="project" value="UniProtKB"/>
</dbReference>
<dbReference type="GO" id="GO:0050265">
    <property type="term" value="F:RNA uridylyltransferase activity"/>
    <property type="evidence" value="ECO:0000314"/>
    <property type="project" value="UniProtKB"/>
</dbReference>
<dbReference type="GO" id="GO:0070569">
    <property type="term" value="F:uridylyltransferase activity"/>
    <property type="evidence" value="ECO:0000314"/>
    <property type="project" value="UniProtKB"/>
</dbReference>
<dbReference type="GO" id="GO:0008270">
    <property type="term" value="F:zinc ion binding"/>
    <property type="evidence" value="ECO:0007669"/>
    <property type="project" value="UniProtKB-KW"/>
</dbReference>
<dbReference type="GO" id="GO:0010586">
    <property type="term" value="P:miRNA metabolic process"/>
    <property type="evidence" value="ECO:0000314"/>
    <property type="project" value="UniProtKB"/>
</dbReference>
<dbReference type="GO" id="GO:0001556">
    <property type="term" value="P:oocyte maturation"/>
    <property type="evidence" value="ECO:0000250"/>
    <property type="project" value="UniProtKB"/>
</dbReference>
<dbReference type="GO" id="GO:1990074">
    <property type="term" value="P:polyuridylation-dependent mRNA catabolic process"/>
    <property type="evidence" value="ECO:0000250"/>
    <property type="project" value="UniProtKB"/>
</dbReference>
<dbReference type="GO" id="GO:0031054">
    <property type="term" value="P:pre-miRNA processing"/>
    <property type="evidence" value="ECO:0000314"/>
    <property type="project" value="UniProtKB"/>
</dbReference>
<dbReference type="GO" id="GO:0031123">
    <property type="term" value="P:RNA 3'-end processing"/>
    <property type="evidence" value="ECO:0000314"/>
    <property type="project" value="UniProtKB"/>
</dbReference>
<dbReference type="GO" id="GO:0141008">
    <property type="term" value="P:transposable element silencing by mRNA destabilization"/>
    <property type="evidence" value="ECO:0000314"/>
    <property type="project" value="UniProtKB"/>
</dbReference>
<dbReference type="CDD" id="cd05402">
    <property type="entry name" value="NT_PAP_TUTase"/>
    <property type="match status" value="2"/>
</dbReference>
<dbReference type="FunFam" id="1.10.1410.10:FF:000002">
    <property type="entry name" value="terminal uridylyltransferase 4 isoform X1"/>
    <property type="match status" value="1"/>
</dbReference>
<dbReference type="FunFam" id="3.30.460.10:FF:000005">
    <property type="entry name" value="terminal uridylyltransferase 4 isoform X1"/>
    <property type="match status" value="1"/>
</dbReference>
<dbReference type="FunFam" id="3.30.460.10:FF:000013">
    <property type="entry name" value="terminal uridylyltransferase 4 isoform X1"/>
    <property type="match status" value="1"/>
</dbReference>
<dbReference type="FunFam" id="1.10.1410.10:FF:000004">
    <property type="entry name" value="terminal uridylyltransferase 4 isoform X2"/>
    <property type="match status" value="1"/>
</dbReference>
<dbReference type="Gene3D" id="1.10.1410.10">
    <property type="match status" value="2"/>
</dbReference>
<dbReference type="Gene3D" id="3.30.460.10">
    <property type="entry name" value="Beta Polymerase, domain 2"/>
    <property type="match status" value="2"/>
</dbReference>
<dbReference type="Gene3D" id="4.10.60.10">
    <property type="entry name" value="Zinc finger, CCHC-type"/>
    <property type="match status" value="1"/>
</dbReference>
<dbReference type="InterPro" id="IPR003604">
    <property type="entry name" value="Matrin/U1-like-C_Znf_C2H2"/>
</dbReference>
<dbReference type="InterPro" id="IPR054708">
    <property type="entry name" value="MTPAP-like_central"/>
</dbReference>
<dbReference type="InterPro" id="IPR043519">
    <property type="entry name" value="NT_sf"/>
</dbReference>
<dbReference type="InterPro" id="IPR002058">
    <property type="entry name" value="PAP_assoc"/>
</dbReference>
<dbReference type="InterPro" id="IPR045100">
    <property type="entry name" value="TUT4/7_NTP_transf"/>
</dbReference>
<dbReference type="InterPro" id="IPR001878">
    <property type="entry name" value="Znf_CCHC"/>
</dbReference>
<dbReference type="InterPro" id="IPR036875">
    <property type="entry name" value="Znf_CCHC_sf"/>
</dbReference>
<dbReference type="PANTHER" id="PTHR12271">
    <property type="entry name" value="POLY A POLYMERASE CID PAP -RELATED"/>
    <property type="match status" value="1"/>
</dbReference>
<dbReference type="PANTHER" id="PTHR12271:SF34">
    <property type="entry name" value="TERMINAL URIDYLYLTRANSFERASE 7"/>
    <property type="match status" value="1"/>
</dbReference>
<dbReference type="Pfam" id="PF22600">
    <property type="entry name" value="MTPAP-like_central"/>
    <property type="match status" value="1"/>
</dbReference>
<dbReference type="Pfam" id="PF03828">
    <property type="entry name" value="PAP_assoc"/>
    <property type="match status" value="2"/>
</dbReference>
<dbReference type="Pfam" id="PF19088">
    <property type="entry name" value="TUTase"/>
    <property type="match status" value="1"/>
</dbReference>
<dbReference type="Pfam" id="PF16631">
    <property type="entry name" value="TUTF7_u4"/>
    <property type="match status" value="1"/>
</dbReference>
<dbReference type="Pfam" id="PF00098">
    <property type="entry name" value="zf-CCHC"/>
    <property type="match status" value="3"/>
</dbReference>
<dbReference type="SMART" id="SM00343">
    <property type="entry name" value="ZnF_C2HC"/>
    <property type="match status" value="3"/>
</dbReference>
<dbReference type="SMART" id="SM00451">
    <property type="entry name" value="ZnF_U1"/>
    <property type="match status" value="1"/>
</dbReference>
<dbReference type="SUPFAM" id="SSF81301">
    <property type="entry name" value="Nucleotidyltransferase"/>
    <property type="match status" value="2"/>
</dbReference>
<dbReference type="SUPFAM" id="SSF81631">
    <property type="entry name" value="PAP/OAS1 substrate-binding domain"/>
    <property type="match status" value="2"/>
</dbReference>
<dbReference type="SUPFAM" id="SSF57756">
    <property type="entry name" value="Retrovirus zinc finger-like domains"/>
    <property type="match status" value="3"/>
</dbReference>
<dbReference type="PROSITE" id="PS50158">
    <property type="entry name" value="ZF_CCHC"/>
    <property type="match status" value="3"/>
</dbReference>
<dbReference type="PROSITE" id="PS00028">
    <property type="entry name" value="ZINC_FINGER_C2H2_1"/>
    <property type="match status" value="1"/>
</dbReference>
<proteinExistence type="evidence at protein level"/>
<gene>
    <name evidence="18" type="primary">TUT7</name>
    <name type="synonym">HS2</name>
    <name type="synonym">KIAA1711</name>
    <name evidence="18" type="synonym">ZCCHC6</name>
</gene>
<sequence>MGDTAKPYFVKRTKDRGTMDDDDFRRGHPQQDYLIIDDHAKGHGSKMEKGLQKKKITPGNYGNTPRKGPCAVSSNPYAFKNPIYSQPAWMNDSHKDQSKRWLSDEHTGNSDNWREFKPGPRIPVINRQRKDSFQENEDGYRWQDTRGCRTVRRLFHKDLTSLETTSEMEAGSPENKKQRSRPRKPRKTRNEENEQDGDLEGPVIDESVLSTKELLGLQQAEERLKRDCIDRLKRRPRNYPTAKYTCRLCDVLIESIAFAHKHIKEKRHKKNIKEKQEEELLTTLPPPTPSQINAVGIAIDKVVQEFGLHNENLEQRLEIKRIMENVFQHKLPDCSLRLYGSSCSRLGFKNSDVNIDIQFPAIMSQPDVLLLVQECLKNSDSFIDVDADFHARVPVVVCREKQSGLLCKVSAGNENACLTTKHLTALGKLEPKLVPLVIAFRYWAKLCSIDRPEEGGLPPYVFALMAIFFLQQRKEPLLPVYLGSWIEGFSLSKLGNFNLQDIEKDVVIWEHTDSAAGDTGITKEEAPRETPIKRGQVSLILDVKHQPSVPVGQLWVELLRFYALEFNLADLVISIRVKELVSRELKDWPKKRIAIEDPYSVKRNVARTLNSQPVFEYILHCLRTTYKYFALPHKITKSSLLKPLNAITCISEHSKEVINHHPDVQTKDDKLKNSVLAQGPGATSSAANTCKVQPLTLKETAESFGSPPKEEMGNEHISVHPENSDCIQADVNSDDYKGDKVYHPETGRKNEKEKVGRKGKHLLTVDQKRGEHVVCGSTRNNESESTLDLEGFQNPTAKECEGLATLDNKADLDGESTEGTEELEDSLNHFTHSVQGQTSEMIPSDEEEEDDEEEEEEEEPRLTINQREDEDGMANEDELDNTYTGSGDEDALSEEDDELGEAAKYEDVKECGKHVERALLVELNKISLKEENVCEEKNSPVDQSDFFYEFSKLIFTKGKSPTVVCSLCKREGHLKKDCPEDFKRIQLEPLPPLTPKFLNILDQVCIQCYKDFSPTIIEDQAREHIRQNLESFIRQDFPGTKLSLFGSSKNGFGFKQSDLDVCMTINGLETAEGLDCVRTIEELARVLRKHSGLRNILPITTAKVPIVKFFHLRSGLEVDISLYNTLALHNTRLLSAYSAIDPRVKYLCYTMKVFTKMCDIGDASRGSLSSYAYTLMVLYFLQQRNPPVIPVLQEIYKGEKKPEIFVDGWNIYFFDQIDELPTYWSECGKNTESVGQLWLGLLRFYTEEFDFKEHVISIRRKSLLTTFKKQWTSKYIVIEDPFDLNHNLGAGLSRKMTNFIMKAFINGRRVFGIPVKGFPKDYPSKMEYFFDPDVLTEGELAPNDRCCRICGKIGHFMKDCPMRRKVRRRRDQEDALNQRYPENKEKRSKEDKEIHNKYTEREVSTKEDKPIQCTPQKAKPMRAAADLGREKILRPPVEKWKRQDDKDLREKRCFICGREGHIKKECPQFKGSSGSLSSKYMTQGKASAKRTQQES</sequence>
<accession>Q5VYS8</accession>
<accession>Q5H9T0</accession>
<accession>Q5VYS5</accession>
<accession>Q5VYS7</accession>
<accession>Q658Z9</accession>
<accession>Q659A2</accession>
<accession>Q6MZJ3</accession>
<accession>Q8N5F0</accession>
<accession>Q96N57</accession>
<accession>Q96NE8</accession>
<accession>Q9C0F2</accession>
<accession>Q9H8M6</accession>
<keyword id="KW-0002">3D-structure</keyword>
<keyword id="KW-0025">Alternative splicing</keyword>
<keyword id="KW-0963">Cytoplasm</keyword>
<keyword id="KW-0460">Magnesium</keyword>
<keyword id="KW-0464">Manganese</keyword>
<keyword id="KW-0479">Metal-binding</keyword>
<keyword id="KW-0548">Nucleotidyltransferase</keyword>
<keyword id="KW-0597">Phosphoprotein</keyword>
<keyword id="KW-1267">Proteomics identification</keyword>
<keyword id="KW-1185">Reference proteome</keyword>
<keyword id="KW-0677">Repeat</keyword>
<keyword id="KW-0808">Transferase</keyword>
<keyword id="KW-0862">Zinc</keyword>
<keyword id="KW-0863">Zinc-finger</keyword>
<feature type="chain" id="PRO_0000150957" description="Terminal uridylyltransferase 7">
    <location>
        <begin position="1"/>
        <end position="1495"/>
    </location>
</feature>
<feature type="domain" description="PAP-associated 1">
    <location>
        <begin position="551"/>
        <end position="600"/>
    </location>
</feature>
<feature type="domain" description="PAP-associated 2">
    <location>
        <begin position="1233"/>
        <end position="1286"/>
    </location>
</feature>
<feature type="zinc finger region" description="Matrin-type" evidence="4">
    <location>
        <begin position="244"/>
        <end position="274"/>
    </location>
</feature>
<feature type="zinc finger region" description="CCHC-type 1" evidence="3">
    <location>
        <begin position="963"/>
        <end position="980"/>
    </location>
</feature>
<feature type="zinc finger region" description="CCHC-type 2" evidence="3 12 19 20 21">
    <location>
        <begin position="1345"/>
        <end position="1362"/>
    </location>
</feature>
<feature type="zinc finger region" description="CCHC-type 3" evidence="3">
    <location>
        <begin position="1451"/>
        <end position="1468"/>
    </location>
</feature>
<feature type="region of interest" description="Disordered" evidence="5">
    <location>
        <begin position="1"/>
        <end position="30"/>
    </location>
</feature>
<feature type="region of interest" description="Disordered" evidence="5">
    <location>
        <begin position="43"/>
        <end position="69"/>
    </location>
</feature>
<feature type="region of interest" description="Disordered" evidence="5">
    <location>
        <begin position="89"/>
        <end position="140"/>
    </location>
</feature>
<feature type="region of interest" description="Disordered" evidence="5">
    <location>
        <begin position="162"/>
        <end position="205"/>
    </location>
</feature>
<feature type="region of interest" description="Disordered" evidence="5">
    <location>
        <begin position="734"/>
        <end position="757"/>
    </location>
</feature>
<feature type="region of interest" description="Disordered" evidence="5">
    <location>
        <begin position="831"/>
        <end position="898"/>
    </location>
</feature>
<feature type="region of interest" description="Sufficient for monouridylation activity" evidence="11">
    <location>
        <begin position="951"/>
        <end position="1495"/>
    </location>
</feature>
<feature type="region of interest" description="Disordered" evidence="5">
    <location>
        <begin position="1367"/>
        <end position="1424"/>
    </location>
</feature>
<feature type="region of interest" description="Disordered" evidence="5">
    <location>
        <begin position="1466"/>
        <end position="1495"/>
    </location>
</feature>
<feature type="compositionally biased region" description="Basic and acidic residues" evidence="5">
    <location>
        <begin position="15"/>
        <end position="26"/>
    </location>
</feature>
<feature type="compositionally biased region" description="Basic and acidic residues" evidence="5">
    <location>
        <begin position="92"/>
        <end position="118"/>
    </location>
</feature>
<feature type="compositionally biased region" description="Basic and acidic residues" evidence="5">
    <location>
        <begin position="128"/>
        <end position="140"/>
    </location>
</feature>
<feature type="compositionally biased region" description="Basic residues" evidence="5">
    <location>
        <begin position="178"/>
        <end position="187"/>
    </location>
</feature>
<feature type="compositionally biased region" description="Basic and acidic residues" evidence="5">
    <location>
        <begin position="734"/>
        <end position="756"/>
    </location>
</feature>
<feature type="compositionally biased region" description="Polar residues" evidence="5">
    <location>
        <begin position="831"/>
        <end position="841"/>
    </location>
</feature>
<feature type="compositionally biased region" description="Acidic residues" evidence="5">
    <location>
        <begin position="843"/>
        <end position="859"/>
    </location>
</feature>
<feature type="compositionally biased region" description="Acidic residues" evidence="5">
    <location>
        <begin position="868"/>
        <end position="880"/>
    </location>
</feature>
<feature type="compositionally biased region" description="Acidic residues" evidence="5">
    <location>
        <begin position="887"/>
        <end position="898"/>
    </location>
</feature>
<feature type="compositionally biased region" description="Basic and acidic residues" evidence="5">
    <location>
        <begin position="1381"/>
        <end position="1410"/>
    </location>
</feature>
<feature type="compositionally biased region" description="Polar residues" evidence="5">
    <location>
        <begin position="1470"/>
        <end position="1485"/>
    </location>
</feature>
<feature type="binding site" evidence="21 22">
    <location>
        <begin position="1047"/>
        <end position="1050"/>
    </location>
    <ligand>
        <name>UTP</name>
        <dbReference type="ChEBI" id="CHEBI:46398"/>
    </ligand>
</feature>
<feature type="binding site" evidence="21 22">
    <location>
        <begin position="1057"/>
        <end position="1060"/>
    </location>
    <ligand>
        <name>UTP</name>
        <dbReference type="ChEBI" id="CHEBI:46398"/>
    </ligand>
</feature>
<feature type="binding site" evidence="1">
    <location>
        <position position="1058"/>
    </location>
    <ligand>
        <name>Mg(2+)</name>
        <dbReference type="ChEBI" id="CHEBI:18420"/>
        <note>catalytic</note>
    </ligand>
</feature>
<feature type="binding site" evidence="1">
    <location>
        <position position="1060"/>
    </location>
    <ligand>
        <name>Mg(2+)</name>
        <dbReference type="ChEBI" id="CHEBI:18420"/>
        <note>catalytic</note>
    </ligand>
</feature>
<feature type="binding site" evidence="21 22">
    <location>
        <position position="1130"/>
    </location>
    <ligand>
        <name>UTP</name>
        <dbReference type="ChEBI" id="CHEBI:46398"/>
    </ligand>
</feature>
<feature type="binding site" evidence="21 22">
    <location>
        <position position="1152"/>
    </location>
    <ligand>
        <name>UTP</name>
        <dbReference type="ChEBI" id="CHEBI:46398"/>
    </ligand>
</feature>
<feature type="binding site" evidence="21 22">
    <location>
        <begin position="1170"/>
        <end position="1174"/>
    </location>
    <ligand>
        <name>UTP</name>
        <dbReference type="ChEBI" id="CHEBI:46398"/>
    </ligand>
</feature>
<feature type="binding site" evidence="21 22">
    <location>
        <position position="1286"/>
    </location>
    <ligand>
        <name>UTP</name>
        <dbReference type="ChEBI" id="CHEBI:46398"/>
    </ligand>
</feature>
<feature type="modified residue" description="Phosphothreonine" evidence="23">
    <location>
        <position position="57"/>
    </location>
</feature>
<feature type="modified residue" description="Phosphothreonine" evidence="23 26">
    <location>
        <position position="64"/>
    </location>
</feature>
<feature type="modified residue" description="Phosphoserine" evidence="2">
    <location>
        <position position="132"/>
    </location>
</feature>
<feature type="modified residue" description="Phosphoserine" evidence="23">
    <location>
        <position position="172"/>
    </location>
</feature>
<feature type="modified residue" description="Phosphoserine" evidence="26">
    <location>
        <position position="600"/>
    </location>
</feature>
<feature type="modified residue" description="Phosphoserine" evidence="23">
    <location>
        <position position="844"/>
    </location>
</feature>
<feature type="modified residue" description="Phosphoserine" evidence="2">
    <location>
        <position position="893"/>
    </location>
</feature>
<feature type="modified residue" description="Phosphoserine" evidence="24 25">
    <location>
        <position position="939"/>
    </location>
</feature>
<feature type="splice variant" id="VSP_013832" description="In isoform 4." evidence="16">
    <original>MSQPDVLLLVQECLKNSDSFIDVDADFHARVPVVVCREKQSGLLCKVSAGNENACLTTKHLTALGKLEPKLVPLVIAFRYWAKLCSIDRPEEGGLPPYVFALMAIFFLQQRKEPLLPVYLGSWI</original>
    <variation>I</variation>
    <location>
        <begin position="363"/>
        <end position="486"/>
    </location>
</feature>
<feature type="splice variant" id="VSP_013833" description="In isoform 5." evidence="15">
    <original>SGLLCKVSAG</original>
    <variation>RSHFFKLFIY</variation>
    <location>
        <begin position="403"/>
        <end position="412"/>
    </location>
</feature>
<feature type="splice variant" id="VSP_013834" description="In isoform 5." evidence="15">
    <location>
        <begin position="413"/>
        <end position="1495"/>
    </location>
</feature>
<feature type="splice variant" id="VSP_013835" description="In isoform 3." evidence="16">
    <original>SLILDVK</original>
    <variation>VSSLLCR</variation>
    <location>
        <begin position="538"/>
        <end position="544"/>
    </location>
</feature>
<feature type="splice variant" id="VSP_013836" description="In isoform 3." evidence="16">
    <location>
        <begin position="545"/>
        <end position="1495"/>
    </location>
</feature>
<feature type="splice variant" id="VSP_013837" description="In isoform 2." evidence="16">
    <original>DPYSVKRNVARTLNSQPVF</original>
    <variation>GISKCLSYSPPLFFLKVPV</variation>
    <location>
        <begin position="597"/>
        <end position="615"/>
    </location>
</feature>
<feature type="splice variant" id="VSP_013838" description="In isoform 2." evidence="16">
    <location>
        <begin position="616"/>
        <end position="1495"/>
    </location>
</feature>
<feature type="splice variant" id="VSP_013839" description="In isoform 4." evidence="16">
    <location>
        <begin position="960"/>
        <end position="1072"/>
    </location>
</feature>
<feature type="splice variant" id="VSP_013840" description="In isoform 6." evidence="14">
    <location>
        <begin position="1157"/>
        <end position="1194"/>
    </location>
</feature>
<feature type="sequence variant" id="VAR_053753" description="In dbSNP:rs2378695.">
    <original>A</original>
    <variation>V</variation>
    <location>
        <position position="40"/>
    </location>
</feature>
<feature type="mutagenesis site" description="Abolishes inhibition of LIRE1 retrotransposition." evidence="13">
    <original>D</original>
    <variation>A</variation>
    <location>
        <position position="1060"/>
    </location>
</feature>
<feature type="mutagenesis site" description="Abolishes monouridylation activity." evidence="12">
    <original>LPI</original>
    <variation>WPW</variation>
    <location>
        <begin position="1097"/>
        <end position="1099"/>
    </location>
</feature>
<feature type="sequence conflict" description="In Ref. 4; BAB70951." evidence="17" ref="4">
    <original>K</original>
    <variation>R</variation>
    <location>
        <position position="157"/>
    </location>
</feature>
<feature type="sequence conflict" description="In Ref. 1; CAE46038." evidence="17" ref="1">
    <original>R</original>
    <variation>T</variation>
    <location>
        <position position="316"/>
    </location>
</feature>
<feature type="sequence conflict" description="In Ref. 1; CAE46038." evidence="17" ref="1">
    <original>S</original>
    <variation>N</variation>
    <location>
        <position position="514"/>
    </location>
</feature>
<feature type="sequence conflict" description="In Ref. 1; CAI45944." evidence="17" ref="1">
    <original>G</original>
    <variation>V</variation>
    <location>
        <position position="900"/>
    </location>
</feature>
<feature type="sequence conflict" description="In Ref. 1; CAI45944/CAH56219." evidence="17" ref="1">
    <location>
        <position position="937"/>
    </location>
</feature>
<feature type="sequence conflict" description="In Ref. 1; CAH56219." evidence="17" ref="1">
    <original>V</original>
    <variation>M</variation>
    <location>
        <position position="1104"/>
    </location>
</feature>
<feature type="sequence conflict" description="In Ref. 1; CAH56219." evidence="17" ref="1">
    <original>P</original>
    <variation>S</variation>
    <location>
        <position position="1319"/>
    </location>
</feature>
<feature type="sequence conflict" description="In Ref. 1; CAI45944." evidence="17" ref="1">
    <original>G</original>
    <variation>D</variation>
    <location>
        <position position="1474"/>
    </location>
</feature>
<feature type="helix" evidence="28">
    <location>
        <begin position="995"/>
        <end position="1012"/>
    </location>
</feature>
<feature type="helix" evidence="28">
    <location>
        <begin position="1016"/>
        <end position="1034"/>
    </location>
</feature>
<feature type="strand" evidence="28">
    <location>
        <begin position="1040"/>
        <end position="1045"/>
    </location>
</feature>
<feature type="helix" evidence="28">
    <location>
        <begin position="1046"/>
        <end position="1048"/>
    </location>
</feature>
<feature type="strand" evidence="28">
    <location>
        <begin position="1059"/>
        <end position="1065"/>
    </location>
</feature>
<feature type="helix" evidence="28">
    <location>
        <begin position="1071"/>
        <end position="1073"/>
    </location>
</feature>
<feature type="helix" evidence="28">
    <location>
        <begin position="1076"/>
        <end position="1087"/>
    </location>
</feature>
<feature type="strand" evidence="28">
    <location>
        <begin position="1093"/>
        <end position="1099"/>
    </location>
</feature>
<feature type="strand" evidence="28">
    <location>
        <begin position="1101"/>
        <end position="1104"/>
    </location>
</feature>
<feature type="strand" evidence="28">
    <location>
        <begin position="1106"/>
        <end position="1111"/>
    </location>
</feature>
<feature type="turn" evidence="28">
    <location>
        <begin position="1112"/>
        <end position="1115"/>
    </location>
</feature>
<feature type="strand" evidence="28">
    <location>
        <begin position="1116"/>
        <end position="1123"/>
    </location>
</feature>
<feature type="helix" evidence="28">
    <location>
        <begin position="1125"/>
        <end position="1138"/>
    </location>
</feature>
<feature type="helix" evidence="28">
    <location>
        <begin position="1142"/>
        <end position="1158"/>
    </location>
</feature>
<feature type="helix" evidence="28">
    <location>
        <begin position="1163"/>
        <end position="1165"/>
    </location>
</feature>
<feature type="helix" evidence="28">
    <location>
        <begin position="1170"/>
        <end position="1183"/>
    </location>
</feature>
<feature type="strand" evidence="28">
    <location>
        <begin position="1184"/>
        <end position="1186"/>
    </location>
</feature>
<feature type="helix" evidence="28">
    <location>
        <begin position="1192"/>
        <end position="1194"/>
    </location>
</feature>
<feature type="strand" evidence="29">
    <location>
        <begin position="1197"/>
        <end position="1200"/>
    </location>
</feature>
<feature type="helix" evidence="28">
    <location>
        <begin position="1217"/>
        <end position="1219"/>
    </location>
</feature>
<feature type="helix" evidence="28">
    <location>
        <begin position="1220"/>
        <end position="1223"/>
    </location>
</feature>
<feature type="turn" evidence="28">
    <location>
        <begin position="1225"/>
        <end position="1228"/>
    </location>
</feature>
<feature type="helix" evidence="28">
    <location>
        <begin position="1234"/>
        <end position="1247"/>
    </location>
</feature>
<feature type="turn" evidence="28">
    <location>
        <begin position="1251"/>
        <end position="1253"/>
    </location>
</feature>
<feature type="strand" evidence="28">
    <location>
        <begin position="1254"/>
        <end position="1256"/>
    </location>
</feature>
<feature type="helix" evidence="28">
    <location>
        <begin position="1266"/>
        <end position="1269"/>
    </location>
</feature>
<feature type="strand" evidence="27">
    <location>
        <begin position="1273"/>
        <end position="1275"/>
    </location>
</feature>
<feature type="turn" evidence="28">
    <location>
        <begin position="1288"/>
        <end position="1291"/>
    </location>
</feature>
<feature type="helix" evidence="28">
    <location>
        <begin position="1294"/>
        <end position="1312"/>
    </location>
</feature>
<feature type="turn" evidence="28">
    <location>
        <begin position="1316"/>
        <end position="1321"/>
    </location>
</feature>
<feature type="strand" evidence="30">
    <location>
        <begin position="1322"/>
        <end position="1324"/>
    </location>
</feature>
<feature type="helix" evidence="28">
    <location>
        <begin position="1325"/>
        <end position="1329"/>
    </location>
</feature>
<feature type="helix" evidence="28">
    <location>
        <begin position="1332"/>
        <end position="1335"/>
    </location>
</feature>
<feature type="strand" evidence="27">
    <location>
        <begin position="1344"/>
        <end position="1346"/>
    </location>
</feature>
<feature type="turn" evidence="28">
    <location>
        <begin position="1348"/>
        <end position="1350"/>
    </location>
</feature>
<feature type="strand" evidence="27">
    <location>
        <begin position="1353"/>
        <end position="1355"/>
    </location>
</feature>
<feature type="helix" evidence="28">
    <location>
        <begin position="1357"/>
        <end position="1359"/>
    </location>
</feature>